<organism>
    <name type="scientific">Homo sapiens</name>
    <name type="common">Human</name>
    <dbReference type="NCBI Taxonomy" id="9606"/>
    <lineage>
        <taxon>Eukaryota</taxon>
        <taxon>Metazoa</taxon>
        <taxon>Chordata</taxon>
        <taxon>Craniata</taxon>
        <taxon>Vertebrata</taxon>
        <taxon>Euteleostomi</taxon>
        <taxon>Mammalia</taxon>
        <taxon>Eutheria</taxon>
        <taxon>Euarchontoglires</taxon>
        <taxon>Primates</taxon>
        <taxon>Haplorrhini</taxon>
        <taxon>Catarrhini</taxon>
        <taxon>Hominidae</taxon>
        <taxon>Homo</taxon>
    </lineage>
</organism>
<protein>
    <recommendedName>
        <fullName>Protein FAM227B</fullName>
    </recommendedName>
</protein>
<gene>
    <name type="primary">FAM227B</name>
    <name type="synonym">C15orf33</name>
</gene>
<feature type="chain" id="PRO_0000244098" description="Protein FAM227B">
    <location>
        <begin position="1"/>
        <end position="508"/>
    </location>
</feature>
<feature type="region of interest" description="Disordered" evidence="1">
    <location>
        <begin position="1"/>
        <end position="22"/>
    </location>
</feature>
<feature type="region of interest" description="Disordered" evidence="1">
    <location>
        <begin position="485"/>
        <end position="508"/>
    </location>
</feature>
<feature type="compositionally biased region" description="Low complexity" evidence="1">
    <location>
        <begin position="486"/>
        <end position="497"/>
    </location>
</feature>
<feature type="splice variant" id="VSP_019517" description="In isoform 2." evidence="2">
    <location>
        <begin position="216"/>
        <end position="249"/>
    </location>
</feature>
<feature type="splice variant" id="VSP_019518" description="In isoform 2." evidence="2">
    <location>
        <begin position="339"/>
        <end position="508"/>
    </location>
</feature>
<feature type="sequence conflict" description="In Ref. 1; BAB71451." evidence="3" ref="1">
    <original>I</original>
    <variation>M</variation>
    <location>
        <position position="57"/>
    </location>
</feature>
<proteinExistence type="evidence at protein level"/>
<dbReference type="EMBL" id="AK057362">
    <property type="protein sequence ID" value="BAB71451.1"/>
    <property type="molecule type" value="mRNA"/>
</dbReference>
<dbReference type="EMBL" id="AC018927">
    <property type="status" value="NOT_ANNOTATED_CDS"/>
    <property type="molecule type" value="Genomic_DNA"/>
</dbReference>
<dbReference type="EMBL" id="AC022306">
    <property type="status" value="NOT_ANNOTATED_CDS"/>
    <property type="molecule type" value="Genomic_DNA"/>
</dbReference>
<dbReference type="EMBL" id="AC025919">
    <property type="status" value="NOT_ANNOTATED_CDS"/>
    <property type="molecule type" value="Genomic_DNA"/>
</dbReference>
<dbReference type="EMBL" id="BC048125">
    <property type="protein sequence ID" value="AAH48125.1"/>
    <property type="molecule type" value="mRNA"/>
</dbReference>
<dbReference type="CCDS" id="CCDS32237.1">
    <molecule id="Q96M60-1"/>
</dbReference>
<dbReference type="CCDS" id="CCDS81880.1">
    <molecule id="Q96M60-2"/>
</dbReference>
<dbReference type="RefSeq" id="NP_001317222.1">
    <molecule id="Q96M60-2"/>
    <property type="nucleotide sequence ID" value="NM_001330293.2"/>
</dbReference>
<dbReference type="RefSeq" id="NP_689860.2">
    <molecule id="Q96M60-1"/>
    <property type="nucleotide sequence ID" value="NM_152647.3"/>
</dbReference>
<dbReference type="RefSeq" id="XP_006720487.1">
    <property type="nucleotide sequence ID" value="XM_006720424.2"/>
</dbReference>
<dbReference type="SMR" id="Q96M60"/>
<dbReference type="BioGRID" id="128231">
    <property type="interactions" value="15"/>
</dbReference>
<dbReference type="FunCoup" id="Q96M60">
    <property type="interactions" value="23"/>
</dbReference>
<dbReference type="IntAct" id="Q96M60">
    <property type="interactions" value="14"/>
</dbReference>
<dbReference type="STRING" id="9606.ENSP00000299338"/>
<dbReference type="GlyGen" id="Q96M60">
    <property type="glycosylation" value="3 sites, 1 O-linked glycan (3 sites)"/>
</dbReference>
<dbReference type="iPTMnet" id="Q96M60"/>
<dbReference type="PhosphoSitePlus" id="Q96M60"/>
<dbReference type="BioMuta" id="FAM227B"/>
<dbReference type="DMDM" id="109822386"/>
<dbReference type="jPOST" id="Q96M60"/>
<dbReference type="MassIVE" id="Q96M60"/>
<dbReference type="PaxDb" id="9606-ENSP00000299338"/>
<dbReference type="PeptideAtlas" id="Q96M60"/>
<dbReference type="ProteomicsDB" id="77297">
    <molecule id="Q96M60-1"/>
</dbReference>
<dbReference type="ProteomicsDB" id="77298">
    <molecule id="Q96M60-2"/>
</dbReference>
<dbReference type="Antibodypedia" id="53018">
    <property type="antibodies" value="21 antibodies from 9 providers"/>
</dbReference>
<dbReference type="DNASU" id="196951"/>
<dbReference type="Ensembl" id="ENST00000299338.11">
    <molecule id="Q96M60-1"/>
    <property type="protein sequence ID" value="ENSP00000299338.6"/>
    <property type="gene ID" value="ENSG00000166262.16"/>
</dbReference>
<dbReference type="Ensembl" id="ENST00000561064.5">
    <molecule id="Q96M60-2"/>
    <property type="protein sequence ID" value="ENSP00000453028.1"/>
    <property type="gene ID" value="ENSG00000166262.16"/>
</dbReference>
<dbReference type="GeneID" id="196951"/>
<dbReference type="KEGG" id="hsa:196951"/>
<dbReference type="MANE-Select" id="ENST00000299338.11">
    <property type="protein sequence ID" value="ENSP00000299338.6"/>
    <property type="RefSeq nucleotide sequence ID" value="NM_152647.3"/>
    <property type="RefSeq protein sequence ID" value="NP_689860.2"/>
</dbReference>
<dbReference type="UCSC" id="uc001zxl.3">
    <molecule id="Q96M60-1"/>
    <property type="organism name" value="human"/>
</dbReference>
<dbReference type="AGR" id="HGNC:26543"/>
<dbReference type="CTD" id="196951"/>
<dbReference type="DisGeNET" id="196951"/>
<dbReference type="GeneCards" id="FAM227B"/>
<dbReference type="HGNC" id="HGNC:26543">
    <property type="gene designation" value="FAM227B"/>
</dbReference>
<dbReference type="HPA" id="ENSG00000166262">
    <property type="expression patterns" value="Low tissue specificity"/>
</dbReference>
<dbReference type="neXtProt" id="NX_Q96M60"/>
<dbReference type="OpenTargets" id="ENSG00000166262"/>
<dbReference type="PharmGKB" id="PA142672269"/>
<dbReference type="VEuPathDB" id="HostDB:ENSG00000166262"/>
<dbReference type="eggNOG" id="ENOG502RXR1">
    <property type="taxonomic scope" value="Eukaryota"/>
</dbReference>
<dbReference type="GeneTree" id="ENSGT00940000162699"/>
<dbReference type="HOGENOM" id="CLU_028274_0_0_1"/>
<dbReference type="InParanoid" id="Q96M60"/>
<dbReference type="OMA" id="NNPRAYT"/>
<dbReference type="OrthoDB" id="73353at2759"/>
<dbReference type="PAN-GO" id="Q96M60">
    <property type="GO annotations" value="0 GO annotations based on evolutionary models"/>
</dbReference>
<dbReference type="PhylomeDB" id="Q96M60"/>
<dbReference type="TreeFam" id="TF328873"/>
<dbReference type="PathwayCommons" id="Q96M60"/>
<dbReference type="SignaLink" id="Q96M60"/>
<dbReference type="BioGRID-ORCS" id="196951">
    <property type="hits" value="7 hits in 1145 CRISPR screens"/>
</dbReference>
<dbReference type="ChiTaRS" id="FAM227B">
    <property type="organism name" value="human"/>
</dbReference>
<dbReference type="GenomeRNAi" id="196951"/>
<dbReference type="Pharos" id="Q96M60">
    <property type="development level" value="Tdark"/>
</dbReference>
<dbReference type="PRO" id="PR:Q96M60"/>
<dbReference type="Proteomes" id="UP000005640">
    <property type="component" value="Chromosome 15"/>
</dbReference>
<dbReference type="RNAct" id="Q96M60">
    <property type="molecule type" value="protein"/>
</dbReference>
<dbReference type="Bgee" id="ENSG00000166262">
    <property type="expression patterns" value="Expressed in male germ line stem cell (sensu Vertebrata) in testis and 104 other cell types or tissues"/>
</dbReference>
<dbReference type="ExpressionAtlas" id="Q96M60">
    <property type="expression patterns" value="baseline and differential"/>
</dbReference>
<dbReference type="InterPro" id="IPR029417">
    <property type="entry name" value="FAM227"/>
</dbReference>
<dbReference type="PANTHER" id="PTHR33560">
    <property type="entry name" value="PROTEIN FAM227B"/>
    <property type="match status" value="1"/>
</dbReference>
<dbReference type="PANTHER" id="PTHR33560:SF2">
    <property type="entry name" value="PROTEIN FAM227B"/>
    <property type="match status" value="1"/>
</dbReference>
<dbReference type="Pfam" id="PF14922">
    <property type="entry name" value="FWWh"/>
    <property type="match status" value="1"/>
</dbReference>
<sequence>MAGQRTCQRRSSRAGPGKMQEPPKSIEEFLKFQNWDYWPREIHFRDDDKWSCTLKKIKEDSSFVSIYTHLWENVPRIFEALLIMESKLKEYSLILQNHTSEIFKWKSMISETSSYRKLERYGEFLKKYHKKKKIMLSDEMETEKNIEGCSFTGFKANELTQLPRHLDAEQIYLFILKAHNFDERVFKIWKTHFLSEASIALLHDSFWWWFLHKFRPDRENQDCLFDRISESYVTLFMSIPLSRKDAFFQIYPDCLAQAIYATFHEAFPESSYLFNDEFKEDLGNNIFLWCSGLKPQKGFWIHWKLKELSTTTIHGSKKAPAKSVKERIADSQEHISTSIDFNIIKILNNPRAYTLPISKEESRLSRLATKSHYSSTGPEFNRVLFNFGGQSPLILYYLKMHELAGISKAPKKTKIKLTKIFQEPLPAPTYRDVIKEAKRQFARNQKDFRILQAKATKKPHEVKQDFEKFLHKLRSEAEIERECVASLSSSSSSSPSSTDNYNFEEEEY</sequence>
<keyword id="KW-0025">Alternative splicing</keyword>
<keyword id="KW-1267">Proteomics identification</keyword>
<keyword id="KW-1185">Reference proteome</keyword>
<reference key="1">
    <citation type="journal article" date="2004" name="Nat. Genet.">
        <title>Complete sequencing and characterization of 21,243 full-length human cDNAs.</title>
        <authorList>
            <person name="Ota T."/>
            <person name="Suzuki Y."/>
            <person name="Nishikawa T."/>
            <person name="Otsuki T."/>
            <person name="Sugiyama T."/>
            <person name="Irie R."/>
            <person name="Wakamatsu A."/>
            <person name="Hayashi K."/>
            <person name="Sato H."/>
            <person name="Nagai K."/>
            <person name="Kimura K."/>
            <person name="Makita H."/>
            <person name="Sekine M."/>
            <person name="Obayashi M."/>
            <person name="Nishi T."/>
            <person name="Shibahara T."/>
            <person name="Tanaka T."/>
            <person name="Ishii S."/>
            <person name="Yamamoto J."/>
            <person name="Saito K."/>
            <person name="Kawai Y."/>
            <person name="Isono Y."/>
            <person name="Nakamura Y."/>
            <person name="Nagahari K."/>
            <person name="Murakami K."/>
            <person name="Yasuda T."/>
            <person name="Iwayanagi T."/>
            <person name="Wagatsuma M."/>
            <person name="Shiratori A."/>
            <person name="Sudo H."/>
            <person name="Hosoiri T."/>
            <person name="Kaku Y."/>
            <person name="Kodaira H."/>
            <person name="Kondo H."/>
            <person name="Sugawara M."/>
            <person name="Takahashi M."/>
            <person name="Kanda K."/>
            <person name="Yokoi T."/>
            <person name="Furuya T."/>
            <person name="Kikkawa E."/>
            <person name="Omura Y."/>
            <person name="Abe K."/>
            <person name="Kamihara K."/>
            <person name="Katsuta N."/>
            <person name="Sato K."/>
            <person name="Tanikawa M."/>
            <person name="Yamazaki M."/>
            <person name="Ninomiya K."/>
            <person name="Ishibashi T."/>
            <person name="Yamashita H."/>
            <person name="Murakawa K."/>
            <person name="Fujimori K."/>
            <person name="Tanai H."/>
            <person name="Kimata M."/>
            <person name="Watanabe M."/>
            <person name="Hiraoka S."/>
            <person name="Chiba Y."/>
            <person name="Ishida S."/>
            <person name="Ono Y."/>
            <person name="Takiguchi S."/>
            <person name="Watanabe S."/>
            <person name="Yosida M."/>
            <person name="Hotuta T."/>
            <person name="Kusano J."/>
            <person name="Kanehori K."/>
            <person name="Takahashi-Fujii A."/>
            <person name="Hara H."/>
            <person name="Tanase T.-O."/>
            <person name="Nomura Y."/>
            <person name="Togiya S."/>
            <person name="Komai F."/>
            <person name="Hara R."/>
            <person name="Takeuchi K."/>
            <person name="Arita M."/>
            <person name="Imose N."/>
            <person name="Musashino K."/>
            <person name="Yuuki H."/>
            <person name="Oshima A."/>
            <person name="Sasaki N."/>
            <person name="Aotsuka S."/>
            <person name="Yoshikawa Y."/>
            <person name="Matsunawa H."/>
            <person name="Ichihara T."/>
            <person name="Shiohata N."/>
            <person name="Sano S."/>
            <person name="Moriya S."/>
            <person name="Momiyama H."/>
            <person name="Satoh N."/>
            <person name="Takami S."/>
            <person name="Terashima Y."/>
            <person name="Suzuki O."/>
            <person name="Nakagawa S."/>
            <person name="Senoh A."/>
            <person name="Mizoguchi H."/>
            <person name="Goto Y."/>
            <person name="Shimizu F."/>
            <person name="Wakebe H."/>
            <person name="Hishigaki H."/>
            <person name="Watanabe T."/>
            <person name="Sugiyama A."/>
            <person name="Takemoto M."/>
            <person name="Kawakami B."/>
            <person name="Yamazaki M."/>
            <person name="Watanabe K."/>
            <person name="Kumagai A."/>
            <person name="Itakura S."/>
            <person name="Fukuzumi Y."/>
            <person name="Fujimori Y."/>
            <person name="Komiyama M."/>
            <person name="Tashiro H."/>
            <person name="Tanigami A."/>
            <person name="Fujiwara T."/>
            <person name="Ono T."/>
            <person name="Yamada K."/>
            <person name="Fujii Y."/>
            <person name="Ozaki K."/>
            <person name="Hirao M."/>
            <person name="Ohmori Y."/>
            <person name="Kawabata A."/>
            <person name="Hikiji T."/>
            <person name="Kobatake N."/>
            <person name="Inagaki H."/>
            <person name="Ikema Y."/>
            <person name="Okamoto S."/>
            <person name="Okitani R."/>
            <person name="Kawakami T."/>
            <person name="Noguchi S."/>
            <person name="Itoh T."/>
            <person name="Shigeta K."/>
            <person name="Senba T."/>
            <person name="Matsumura K."/>
            <person name="Nakajima Y."/>
            <person name="Mizuno T."/>
            <person name="Morinaga M."/>
            <person name="Sasaki M."/>
            <person name="Togashi T."/>
            <person name="Oyama M."/>
            <person name="Hata H."/>
            <person name="Watanabe M."/>
            <person name="Komatsu T."/>
            <person name="Mizushima-Sugano J."/>
            <person name="Satoh T."/>
            <person name="Shirai Y."/>
            <person name="Takahashi Y."/>
            <person name="Nakagawa K."/>
            <person name="Okumura K."/>
            <person name="Nagase T."/>
            <person name="Nomura N."/>
            <person name="Kikuchi H."/>
            <person name="Masuho Y."/>
            <person name="Yamashita R."/>
            <person name="Nakai K."/>
            <person name="Yada T."/>
            <person name="Nakamura Y."/>
            <person name="Ohara O."/>
            <person name="Isogai T."/>
            <person name="Sugano S."/>
        </authorList>
    </citation>
    <scope>NUCLEOTIDE SEQUENCE [LARGE SCALE MRNA] (ISOFORM 1)</scope>
    <source>
        <tissue>Testis</tissue>
    </source>
</reference>
<reference key="2">
    <citation type="journal article" date="2006" name="Nature">
        <title>Analysis of the DNA sequence and duplication history of human chromosome 15.</title>
        <authorList>
            <person name="Zody M.C."/>
            <person name="Garber M."/>
            <person name="Sharpe T."/>
            <person name="Young S.K."/>
            <person name="Rowen L."/>
            <person name="O'Neill K."/>
            <person name="Whittaker C.A."/>
            <person name="Kamal M."/>
            <person name="Chang J.L."/>
            <person name="Cuomo C.A."/>
            <person name="Dewar K."/>
            <person name="FitzGerald M.G."/>
            <person name="Kodira C.D."/>
            <person name="Madan A."/>
            <person name="Qin S."/>
            <person name="Yang X."/>
            <person name="Abbasi N."/>
            <person name="Abouelleil A."/>
            <person name="Arachchi H.M."/>
            <person name="Baradarani L."/>
            <person name="Birditt B."/>
            <person name="Bloom S."/>
            <person name="Bloom T."/>
            <person name="Borowsky M.L."/>
            <person name="Burke J."/>
            <person name="Butler J."/>
            <person name="Cook A."/>
            <person name="DeArellano K."/>
            <person name="DeCaprio D."/>
            <person name="Dorris L. III"/>
            <person name="Dors M."/>
            <person name="Eichler E.E."/>
            <person name="Engels R."/>
            <person name="Fahey J."/>
            <person name="Fleetwood P."/>
            <person name="Friedman C."/>
            <person name="Gearin G."/>
            <person name="Hall J.L."/>
            <person name="Hensley G."/>
            <person name="Johnson E."/>
            <person name="Jones C."/>
            <person name="Kamat A."/>
            <person name="Kaur A."/>
            <person name="Locke D.P."/>
            <person name="Madan A."/>
            <person name="Munson G."/>
            <person name="Jaffe D.B."/>
            <person name="Lui A."/>
            <person name="Macdonald P."/>
            <person name="Mauceli E."/>
            <person name="Naylor J.W."/>
            <person name="Nesbitt R."/>
            <person name="Nicol R."/>
            <person name="O'Leary S.B."/>
            <person name="Ratcliffe A."/>
            <person name="Rounsley S."/>
            <person name="She X."/>
            <person name="Sneddon K.M.B."/>
            <person name="Stewart S."/>
            <person name="Sougnez C."/>
            <person name="Stone S.M."/>
            <person name="Topham K."/>
            <person name="Vincent D."/>
            <person name="Wang S."/>
            <person name="Zimmer A.R."/>
            <person name="Birren B.W."/>
            <person name="Hood L."/>
            <person name="Lander E.S."/>
            <person name="Nusbaum C."/>
        </authorList>
    </citation>
    <scope>NUCLEOTIDE SEQUENCE [LARGE SCALE GENOMIC DNA]</scope>
</reference>
<reference key="3">
    <citation type="journal article" date="2004" name="Genome Res.">
        <title>The status, quality, and expansion of the NIH full-length cDNA project: the Mammalian Gene Collection (MGC).</title>
        <authorList>
            <consortium name="The MGC Project Team"/>
        </authorList>
    </citation>
    <scope>NUCLEOTIDE SEQUENCE [LARGE SCALE MRNA] (ISOFORM 2)</scope>
    <source>
        <tissue>Testis</tissue>
    </source>
</reference>
<accession>Q96M60</accession>
<accession>Q86WS2</accession>
<comment type="alternative products">
    <event type="alternative splicing"/>
    <isoform>
        <id>Q96M60-1</id>
        <name>1</name>
        <sequence type="displayed"/>
    </isoform>
    <isoform>
        <id>Q96M60-2</id>
        <name>2</name>
        <sequence type="described" ref="VSP_019517 VSP_019518"/>
    </isoform>
</comment>
<comment type="similarity">
    <text evidence="3">Belongs to the FAM227 family.</text>
</comment>
<name>F227B_HUMAN</name>
<evidence type="ECO:0000256" key="1">
    <source>
        <dbReference type="SAM" id="MobiDB-lite"/>
    </source>
</evidence>
<evidence type="ECO:0000303" key="2">
    <source>
    </source>
</evidence>
<evidence type="ECO:0000305" key="3"/>